<protein>
    <recommendedName>
        <fullName>tRNA (adenine(57)-N(1)/adenine(58)-N(1))-methyltransferase TrmI</fullName>
        <ecNumber>2.1.1.219</ecNumber>
    </recommendedName>
    <alternativeName>
        <fullName>tRNA(m1A57/58)-methyltransferase</fullName>
    </alternativeName>
</protein>
<sequence length="282" mass="32207">MFAYKLLVDERGKRYLLKKNVEKFGTDLGIVDMKDIEEGVELKSHKGHTFYLVEPTMFDILKRMKRTVTTLLPKDIGFIIARAGIREGETVVEAGTGSGALTMYLSNAVGKTGKVITYDIRPEFAKVARKNLLRVGAIKKGQKIIGLDEEFDDEDEIEIEDGLFNVIQKIGDVREKIDEKDVDVIVLDLPDPWNVVENAKKALNKKRGRIVTYLPYIEQVKKTVEKLKEEGFWDIHTYEIIEREIEISEKGVRPSTRMIGHTGYITVARVPPEPLDREEEKE</sequence>
<comment type="function">
    <text evidence="1">Catalyzes the S-adenosyl-L-methionine-dependent formation of N(1)-methyladenine at position 58 (m1A58) in tRNA.</text>
</comment>
<comment type="catalytic activity">
    <reaction evidence="2">
        <text>adenosine(57)/adenosine(58) in tRNA + 2 S-adenosyl-L-methionine = N(1)-methyladenosine(57)/N(1)-methyladenosine(58) in tRNA + 2 S-adenosyl-L-homocysteine + 2 H(+)</text>
        <dbReference type="Rhea" id="RHEA:41740"/>
        <dbReference type="Rhea" id="RHEA-COMP:9580"/>
        <dbReference type="Rhea" id="RHEA-COMP:9582"/>
        <dbReference type="ChEBI" id="CHEBI:15378"/>
        <dbReference type="ChEBI" id="CHEBI:57856"/>
        <dbReference type="ChEBI" id="CHEBI:59789"/>
        <dbReference type="ChEBI" id="CHEBI:74411"/>
        <dbReference type="ChEBI" id="CHEBI:74491"/>
        <dbReference type="EC" id="2.1.1.219"/>
    </reaction>
</comment>
<comment type="subunit">
    <text evidence="1">Homotetramer composed of a dimer of dimers.</text>
</comment>
<comment type="domain">
    <text evidence="1">Contains a large catalytic C-terminal domain that binds S-adenosyl-L-methionine and a smaller N-terminal domain that may play a role in tRNA recognition. Domains are connected by a linker region.</text>
</comment>
<comment type="similarity">
    <text evidence="2">Belongs to the class I-like SAM-binding methyltransferase superfamily. TRM61 family.</text>
</comment>
<proteinExistence type="inferred from homology"/>
<dbReference type="EC" id="2.1.1.219"/>
<dbReference type="EMBL" id="L77117">
    <property type="protein sequence ID" value="AAB98115.1"/>
    <property type="molecule type" value="Genomic_DNA"/>
</dbReference>
<dbReference type="PIR" id="F64316">
    <property type="entry name" value="F64316"/>
</dbReference>
<dbReference type="RefSeq" id="WP_010869627.1">
    <property type="nucleotide sequence ID" value="NC_000909.1"/>
</dbReference>
<dbReference type="SMR" id="Q57598"/>
<dbReference type="FunCoup" id="Q57598">
    <property type="interactions" value="110"/>
</dbReference>
<dbReference type="STRING" id="243232.MJ_0134"/>
<dbReference type="PaxDb" id="243232-MJ_0134"/>
<dbReference type="EnsemblBacteria" id="AAB98115">
    <property type="protein sequence ID" value="AAB98115"/>
    <property type="gene ID" value="MJ_0134"/>
</dbReference>
<dbReference type="GeneID" id="1450975"/>
<dbReference type="KEGG" id="mja:MJ_0134"/>
<dbReference type="eggNOG" id="arCOG00978">
    <property type="taxonomic scope" value="Archaea"/>
</dbReference>
<dbReference type="HOGENOM" id="CLU_025402_0_1_2"/>
<dbReference type="InParanoid" id="Q57598"/>
<dbReference type="OrthoDB" id="30774at2157"/>
<dbReference type="PhylomeDB" id="Q57598"/>
<dbReference type="Proteomes" id="UP000000805">
    <property type="component" value="Chromosome"/>
</dbReference>
<dbReference type="GO" id="GO:0031515">
    <property type="term" value="C:tRNA (m1A) methyltransferase complex"/>
    <property type="evidence" value="ECO:0000318"/>
    <property type="project" value="GO_Central"/>
</dbReference>
<dbReference type="GO" id="GO:0043827">
    <property type="term" value="F:tRNA (adenine(57)-N1)/(adenine(58)-N1)-methyltransferase activity"/>
    <property type="evidence" value="ECO:0007669"/>
    <property type="project" value="UniProtKB-EC"/>
</dbReference>
<dbReference type="GO" id="GO:0160107">
    <property type="term" value="F:tRNA (adenine(58)-N1)-methyltransferase activity"/>
    <property type="evidence" value="ECO:0007669"/>
    <property type="project" value="InterPro"/>
</dbReference>
<dbReference type="GO" id="GO:0030488">
    <property type="term" value="P:tRNA methylation"/>
    <property type="evidence" value="ECO:0000318"/>
    <property type="project" value="GO_Central"/>
</dbReference>
<dbReference type="CDD" id="cd02440">
    <property type="entry name" value="AdoMet_MTases"/>
    <property type="match status" value="1"/>
</dbReference>
<dbReference type="Gene3D" id="3.10.330.20">
    <property type="match status" value="1"/>
</dbReference>
<dbReference type="Gene3D" id="3.40.50.150">
    <property type="entry name" value="Vaccinia Virus protein VP39"/>
    <property type="match status" value="1"/>
</dbReference>
<dbReference type="InterPro" id="IPR029063">
    <property type="entry name" value="SAM-dependent_MTases_sf"/>
</dbReference>
<dbReference type="InterPro" id="IPR049470">
    <property type="entry name" value="TRM61_C"/>
</dbReference>
<dbReference type="InterPro" id="IPR014816">
    <property type="entry name" value="tRNA_MeTrfase_Gcd14"/>
</dbReference>
<dbReference type="PANTHER" id="PTHR12133">
    <property type="entry name" value="TRNA (ADENINE(58)-N(1))-METHYLTRANSFERASE"/>
    <property type="match status" value="1"/>
</dbReference>
<dbReference type="PANTHER" id="PTHR12133:SF1">
    <property type="entry name" value="TRNA (ADENINE(58)-N(1))-METHYLTRANSFERASE, MITOCHONDRIAL"/>
    <property type="match status" value="1"/>
</dbReference>
<dbReference type="Pfam" id="PF08704">
    <property type="entry name" value="GCD14"/>
    <property type="match status" value="1"/>
</dbReference>
<dbReference type="PIRSF" id="PIRSF017269">
    <property type="entry name" value="GCD14"/>
    <property type="match status" value="1"/>
</dbReference>
<dbReference type="SUPFAM" id="SSF53335">
    <property type="entry name" value="S-adenosyl-L-methionine-dependent methyltransferases"/>
    <property type="match status" value="1"/>
</dbReference>
<dbReference type="PROSITE" id="PS51620">
    <property type="entry name" value="SAM_TRM61"/>
    <property type="match status" value="1"/>
</dbReference>
<name>TRMI_METJA</name>
<keyword id="KW-0489">Methyltransferase</keyword>
<keyword id="KW-1185">Reference proteome</keyword>
<keyword id="KW-0949">S-adenosyl-L-methionine</keyword>
<keyword id="KW-0808">Transferase</keyword>
<keyword id="KW-0819">tRNA processing</keyword>
<organism>
    <name type="scientific">Methanocaldococcus jannaschii (strain ATCC 43067 / DSM 2661 / JAL-1 / JCM 10045 / NBRC 100440)</name>
    <name type="common">Methanococcus jannaschii</name>
    <dbReference type="NCBI Taxonomy" id="243232"/>
    <lineage>
        <taxon>Archaea</taxon>
        <taxon>Methanobacteriati</taxon>
        <taxon>Methanobacteriota</taxon>
        <taxon>Methanomada group</taxon>
        <taxon>Methanococci</taxon>
        <taxon>Methanococcales</taxon>
        <taxon>Methanocaldococcaceae</taxon>
        <taxon>Methanocaldococcus</taxon>
    </lineage>
</organism>
<accession>Q57598</accession>
<evidence type="ECO:0000250" key="1">
    <source>
        <dbReference type="UniProtKB" id="Q8GBB2"/>
    </source>
</evidence>
<evidence type="ECO:0000255" key="2">
    <source>
        <dbReference type="PROSITE-ProRule" id="PRU00952"/>
    </source>
</evidence>
<gene>
    <name type="primary">trmI</name>
    <name type="ordered locus">MJ0134</name>
</gene>
<reference key="1">
    <citation type="journal article" date="1996" name="Science">
        <title>Complete genome sequence of the methanogenic archaeon, Methanococcus jannaschii.</title>
        <authorList>
            <person name="Bult C.J."/>
            <person name="White O."/>
            <person name="Olsen G.J."/>
            <person name="Zhou L."/>
            <person name="Fleischmann R.D."/>
            <person name="Sutton G.G."/>
            <person name="Blake J.A."/>
            <person name="FitzGerald L.M."/>
            <person name="Clayton R.A."/>
            <person name="Gocayne J.D."/>
            <person name="Kerlavage A.R."/>
            <person name="Dougherty B.A."/>
            <person name="Tomb J.-F."/>
            <person name="Adams M.D."/>
            <person name="Reich C.I."/>
            <person name="Overbeek R."/>
            <person name="Kirkness E.F."/>
            <person name="Weinstock K.G."/>
            <person name="Merrick J.M."/>
            <person name="Glodek A."/>
            <person name="Scott J.L."/>
            <person name="Geoghagen N.S.M."/>
            <person name="Weidman J.F."/>
            <person name="Fuhrmann J.L."/>
            <person name="Nguyen D."/>
            <person name="Utterback T.R."/>
            <person name="Kelley J.M."/>
            <person name="Peterson J.D."/>
            <person name="Sadow P.W."/>
            <person name="Hanna M.C."/>
            <person name="Cotton M.D."/>
            <person name="Roberts K.M."/>
            <person name="Hurst M.A."/>
            <person name="Kaine B.P."/>
            <person name="Borodovsky M."/>
            <person name="Klenk H.-P."/>
            <person name="Fraser C.M."/>
            <person name="Smith H.O."/>
            <person name="Woese C.R."/>
            <person name="Venter J.C."/>
        </authorList>
    </citation>
    <scope>NUCLEOTIDE SEQUENCE [LARGE SCALE GENOMIC DNA]</scope>
    <source>
        <strain>ATCC 43067 / DSM 2661 / JAL-1 / JCM 10045 / NBRC 100440</strain>
    </source>
</reference>
<feature type="chain" id="PRO_0000106712" description="tRNA (adenine(57)-N(1)/adenine(58)-N(1))-methyltransferase TrmI">
    <location>
        <begin position="1"/>
        <end position="282"/>
    </location>
</feature>
<feature type="binding site" evidence="1">
    <location>
        <begin position="98"/>
        <end position="101"/>
    </location>
    <ligand>
        <name>S-adenosyl-L-methionine</name>
        <dbReference type="ChEBI" id="CHEBI:59789"/>
    </ligand>
</feature>
<feature type="binding site" evidence="2">
    <location>
        <position position="119"/>
    </location>
    <ligand>
        <name>S-adenosyl-L-methionine</name>
        <dbReference type="ChEBI" id="CHEBI:59789"/>
    </ligand>
</feature>
<feature type="binding site" evidence="2">
    <location>
        <position position="172"/>
    </location>
    <ligand>
        <name>S-adenosyl-L-methionine</name>
        <dbReference type="ChEBI" id="CHEBI:59789"/>
    </ligand>
</feature>
<feature type="binding site" evidence="2">
    <location>
        <position position="188"/>
    </location>
    <ligand>
        <name>S-adenosyl-L-methionine</name>
        <dbReference type="ChEBI" id="CHEBI:59789"/>
    </ligand>
</feature>